<evidence type="ECO:0000250" key="1"/>
<evidence type="ECO:0000269" key="2">
    <source>
    </source>
</evidence>
<evidence type="ECO:0000305" key="3"/>
<evidence type="ECO:0007829" key="4">
    <source>
        <dbReference type="PDB" id="4E5N"/>
    </source>
</evidence>
<keyword id="KW-0002">3D-structure</keyword>
<keyword id="KW-0903">Direct protein sequencing</keyword>
<keyword id="KW-0520">NAD</keyword>
<keyword id="KW-0560">Oxidoreductase</keyword>
<keyword id="KW-0346">Stress response</keyword>
<proteinExistence type="evidence at protein level"/>
<organism>
    <name type="scientific">Stutzerimonas stutzeri</name>
    <name type="common">Pseudomonas stutzeri</name>
    <dbReference type="NCBI Taxonomy" id="316"/>
    <lineage>
        <taxon>Bacteria</taxon>
        <taxon>Pseudomonadati</taxon>
        <taxon>Pseudomonadota</taxon>
        <taxon>Gammaproteobacteria</taxon>
        <taxon>Pseudomonadales</taxon>
        <taxon>Pseudomonadaceae</taxon>
        <taxon>Stutzerimonas</taxon>
    </lineage>
</organism>
<dbReference type="EC" id="1.20.1.1"/>
<dbReference type="EMBL" id="AF061070">
    <property type="protein sequence ID" value="AAC71709.1"/>
    <property type="molecule type" value="Genomic_DNA"/>
</dbReference>
<dbReference type="RefSeq" id="WP_003118429.1">
    <property type="nucleotide sequence ID" value="NZ_WIFO01000013.1"/>
</dbReference>
<dbReference type="PDB" id="4E5K">
    <property type="method" value="X-ray"/>
    <property type="resolution" value="1.95 A"/>
    <property type="chains" value="A/B/C/D=1-329"/>
</dbReference>
<dbReference type="PDB" id="4E5M">
    <property type="method" value="X-ray"/>
    <property type="resolution" value="1.85 A"/>
    <property type="chains" value="A/B=1-329"/>
</dbReference>
<dbReference type="PDB" id="4E5N">
    <property type="method" value="X-ray"/>
    <property type="resolution" value="1.70 A"/>
    <property type="chains" value="A/B/C/D/E/F/G/H=1-330"/>
</dbReference>
<dbReference type="PDB" id="4E5P">
    <property type="method" value="X-ray"/>
    <property type="resolution" value="1.90 A"/>
    <property type="chains" value="A/B/C/D/E/F=1-331"/>
</dbReference>
<dbReference type="PDB" id="4EBF">
    <property type="method" value="X-ray"/>
    <property type="resolution" value="2.30 A"/>
    <property type="chains" value="A/B/C/D/E/F=1-331"/>
</dbReference>
<dbReference type="PDB" id="4NU5">
    <property type="method" value="X-ray"/>
    <property type="resolution" value="2.35 A"/>
    <property type="chains" value="A/B=1-329"/>
</dbReference>
<dbReference type="PDB" id="4NU6">
    <property type="method" value="X-ray"/>
    <property type="resolution" value="2.65 A"/>
    <property type="chains" value="A/B=1-329"/>
</dbReference>
<dbReference type="PDBsum" id="4E5K"/>
<dbReference type="PDBsum" id="4E5M"/>
<dbReference type="PDBsum" id="4E5N"/>
<dbReference type="PDBsum" id="4E5P"/>
<dbReference type="PDBsum" id="4EBF"/>
<dbReference type="PDBsum" id="4NU5"/>
<dbReference type="PDBsum" id="4NU6"/>
<dbReference type="SMR" id="O69054"/>
<dbReference type="GeneID" id="84611248"/>
<dbReference type="OrthoDB" id="9805416at2"/>
<dbReference type="BioCyc" id="MetaCyc:MONOMER-15968"/>
<dbReference type="BRENDA" id="1.20.1.1">
    <property type="organism ID" value="5158"/>
</dbReference>
<dbReference type="SABIO-RK" id="O69054"/>
<dbReference type="EvolutionaryTrace" id="O69054"/>
<dbReference type="GO" id="GO:0005829">
    <property type="term" value="C:cytosol"/>
    <property type="evidence" value="ECO:0007669"/>
    <property type="project" value="TreeGrafter"/>
</dbReference>
<dbReference type="GO" id="GO:0030267">
    <property type="term" value="F:glyoxylate reductase (NADPH) activity"/>
    <property type="evidence" value="ECO:0007669"/>
    <property type="project" value="TreeGrafter"/>
</dbReference>
<dbReference type="GO" id="GO:0008465">
    <property type="term" value="F:hydroxypyruvate reductase (NADH) activity"/>
    <property type="evidence" value="ECO:0007669"/>
    <property type="project" value="TreeGrafter"/>
</dbReference>
<dbReference type="GO" id="GO:0051287">
    <property type="term" value="F:NAD binding"/>
    <property type="evidence" value="ECO:0007669"/>
    <property type="project" value="InterPro"/>
</dbReference>
<dbReference type="GO" id="GO:0050609">
    <property type="term" value="F:phosphonate dehydrogenase activity"/>
    <property type="evidence" value="ECO:0007669"/>
    <property type="project" value="UniProtKB-EC"/>
</dbReference>
<dbReference type="CDD" id="cd12157">
    <property type="entry name" value="PTDH"/>
    <property type="match status" value="1"/>
</dbReference>
<dbReference type="Gene3D" id="3.40.50.720">
    <property type="entry name" value="NAD(P)-binding Rossmann-like Domain"/>
    <property type="match status" value="2"/>
</dbReference>
<dbReference type="InterPro" id="IPR050223">
    <property type="entry name" value="D-isomer_2-hydroxyacid_DH"/>
</dbReference>
<dbReference type="InterPro" id="IPR006139">
    <property type="entry name" value="D-isomer_2_OHA_DH_cat_dom"/>
</dbReference>
<dbReference type="InterPro" id="IPR029753">
    <property type="entry name" value="D-isomer_DH_CS"/>
</dbReference>
<dbReference type="InterPro" id="IPR006140">
    <property type="entry name" value="D-isomer_DH_NAD-bd"/>
</dbReference>
<dbReference type="InterPro" id="IPR036291">
    <property type="entry name" value="NAD(P)-bd_dom_sf"/>
</dbReference>
<dbReference type="PANTHER" id="PTHR10996">
    <property type="entry name" value="2-HYDROXYACID DEHYDROGENASE-RELATED"/>
    <property type="match status" value="1"/>
</dbReference>
<dbReference type="PANTHER" id="PTHR10996:SF257">
    <property type="entry name" value="GLYOXYLATE REDUCTASE 1"/>
    <property type="match status" value="1"/>
</dbReference>
<dbReference type="Pfam" id="PF00389">
    <property type="entry name" value="2-Hacid_dh"/>
    <property type="match status" value="1"/>
</dbReference>
<dbReference type="Pfam" id="PF02826">
    <property type="entry name" value="2-Hacid_dh_C"/>
    <property type="match status" value="1"/>
</dbReference>
<dbReference type="SUPFAM" id="SSF52283">
    <property type="entry name" value="Formate/glycerate dehydrogenase catalytic domain-like"/>
    <property type="match status" value="1"/>
</dbReference>
<dbReference type="SUPFAM" id="SSF51735">
    <property type="entry name" value="NAD(P)-binding Rossmann-fold domains"/>
    <property type="match status" value="1"/>
</dbReference>
<dbReference type="PROSITE" id="PS00671">
    <property type="entry name" value="D_2_HYDROXYACID_DH_3"/>
    <property type="match status" value="1"/>
</dbReference>
<name>PTXD_STUST</name>
<protein>
    <recommendedName>
        <fullName>Phosphonate dehydrogenase</fullName>
        <ecNumber>1.20.1.1</ecNumber>
    </recommendedName>
    <alternativeName>
        <fullName>NAD-dependent phosphite dehydrogenase</fullName>
    </alternativeName>
</protein>
<accession>O69054</accession>
<gene>
    <name type="primary">ptxD</name>
</gene>
<reference key="1">
    <citation type="journal article" date="1998" name="J. Bacteriol.">
        <title>Molecular genetic analysis of phosphite and hypophosphite oxidation by Pseudomonas stutzeri WM88.</title>
        <authorList>
            <person name="Metcalf W.W."/>
            <person name="Wolfe R.S."/>
        </authorList>
    </citation>
    <scope>NUCLEOTIDE SEQUENCE [GENOMIC DNA]</scope>
    <source>
        <strain>WM88</strain>
    </source>
</reference>
<reference key="2">
    <citation type="journal article" date="2001" name="J. Biol. Chem.">
        <title>Purification and characterization of a novel phosphorus-oxidizing enzyme from Pseudomonas stutzeri WM88.</title>
        <authorList>
            <person name="Costas A.M.G."/>
            <person name="White A.K."/>
            <person name="Metcalf W.W."/>
        </authorList>
    </citation>
    <scope>PROTEIN SEQUENCE OF 1-15</scope>
    <scope>FUNCTION</scope>
    <scope>CATALYTIC ACTIVITY</scope>
    <scope>ACTIVITY REGULATION</scope>
    <scope>SUBUNIT</scope>
    <scope>INDUCTION</scope>
    <scope>MASS SPECTROMETRY</scope>
    <source>
        <strain>WM88</strain>
    </source>
</reference>
<sequence length="336" mass="36415">MLPKLVITHRVHDEILQLLAPHCELMTNQTDSTLTREEILRRCRDAQAMMAFMPDRVDADFLQACPELRVVGCALKGFDNFDVDACTARGVWLTFVPDLLTVPTAELAIGLAVGLGRHLRAADAFVRSGEFQGWQPQFYGTGLDNATVGILGMGAIGLAMADRLQGWGATLQYHEAKALDTQTEQRLGLRQVACSELFASSDFILLALPLNADTQHLVNAELLALVRPGALLVNPCRGSVVDEAAVLAALERGQLGGYAADVFEMEDWARADRPRLIDPALLAHPNTLFTPHIGSAVRAVRLEIERCAAQNIIQVLAGARPINAANRLPKAEPAAC</sequence>
<feature type="chain" id="PRO_0000076033" description="Phosphonate dehydrogenase">
    <location>
        <begin position="1"/>
        <end position="336"/>
    </location>
</feature>
<feature type="active site" evidence="1">
    <location>
        <position position="237"/>
    </location>
</feature>
<feature type="active site" evidence="1">
    <location>
        <position position="266"/>
    </location>
</feature>
<feature type="active site" description="Proton donor" evidence="1">
    <location>
        <position position="292"/>
    </location>
</feature>
<feature type="binding site" evidence="1">
    <location>
        <begin position="155"/>
        <end position="156"/>
    </location>
    <ligand>
        <name>NAD(+)</name>
        <dbReference type="ChEBI" id="CHEBI:57540"/>
    </ligand>
</feature>
<feature type="binding site" evidence="1">
    <location>
        <position position="175"/>
    </location>
    <ligand>
        <name>NAD(+)</name>
        <dbReference type="ChEBI" id="CHEBI:57540"/>
    </ligand>
</feature>
<feature type="binding site" evidence="1">
    <location>
        <begin position="235"/>
        <end position="237"/>
    </location>
    <ligand>
        <name>NAD(+)</name>
        <dbReference type="ChEBI" id="CHEBI:57540"/>
    </ligand>
</feature>
<feature type="binding site" evidence="1">
    <location>
        <position position="261"/>
    </location>
    <ligand>
        <name>NAD(+)</name>
        <dbReference type="ChEBI" id="CHEBI:57540"/>
    </ligand>
</feature>
<feature type="binding site" evidence="1">
    <location>
        <begin position="292"/>
        <end position="295"/>
    </location>
    <ligand>
        <name>NAD(+)</name>
        <dbReference type="ChEBI" id="CHEBI:57540"/>
    </ligand>
</feature>
<feature type="strand" evidence="4">
    <location>
        <begin position="4"/>
        <end position="7"/>
    </location>
</feature>
<feature type="helix" evidence="4">
    <location>
        <begin position="13"/>
        <end position="19"/>
    </location>
</feature>
<feature type="turn" evidence="4">
    <location>
        <begin position="20"/>
        <end position="22"/>
    </location>
</feature>
<feature type="strand" evidence="4">
    <location>
        <begin position="24"/>
        <end position="26"/>
    </location>
</feature>
<feature type="strand" evidence="4">
    <location>
        <begin position="30"/>
        <end position="32"/>
    </location>
</feature>
<feature type="helix" evidence="4">
    <location>
        <begin position="36"/>
        <end position="43"/>
    </location>
</feature>
<feature type="strand" evidence="4">
    <location>
        <begin position="47"/>
        <end position="51"/>
    </location>
</feature>
<feature type="helix" evidence="4">
    <location>
        <begin position="59"/>
        <end position="64"/>
    </location>
</feature>
<feature type="strand" evidence="4">
    <location>
        <begin position="70"/>
        <end position="76"/>
    </location>
</feature>
<feature type="helix" evidence="4">
    <location>
        <begin position="83"/>
        <end position="88"/>
    </location>
</feature>
<feature type="strand" evidence="4">
    <location>
        <begin position="92"/>
        <end position="94"/>
    </location>
</feature>
<feature type="helix" evidence="4">
    <location>
        <begin position="101"/>
        <end position="116"/>
    </location>
</feature>
<feature type="helix" evidence="4">
    <location>
        <begin position="119"/>
        <end position="127"/>
    </location>
</feature>
<feature type="strand" evidence="4">
    <location>
        <begin position="147"/>
        <end position="151"/>
    </location>
</feature>
<feature type="helix" evidence="4">
    <location>
        <begin position="155"/>
        <end position="163"/>
    </location>
</feature>
<feature type="turn" evidence="4">
    <location>
        <begin position="164"/>
        <end position="166"/>
    </location>
</feature>
<feature type="strand" evidence="4">
    <location>
        <begin position="170"/>
        <end position="174"/>
    </location>
</feature>
<feature type="helix" evidence="4">
    <location>
        <begin position="181"/>
        <end position="187"/>
    </location>
</feature>
<feature type="strand" evidence="4">
    <location>
        <begin position="189"/>
        <end position="191"/>
    </location>
</feature>
<feature type="helix" evidence="4">
    <location>
        <begin position="194"/>
        <end position="200"/>
    </location>
</feature>
<feature type="strand" evidence="4">
    <location>
        <begin position="202"/>
        <end position="206"/>
    </location>
</feature>
<feature type="turn" evidence="4">
    <location>
        <begin position="212"/>
        <end position="216"/>
    </location>
</feature>
<feature type="helix" evidence="4">
    <location>
        <begin position="220"/>
        <end position="223"/>
    </location>
</feature>
<feature type="strand" evidence="4">
    <location>
        <begin position="230"/>
        <end position="234"/>
    </location>
</feature>
<feature type="helix" evidence="4">
    <location>
        <begin position="238"/>
        <end position="240"/>
    </location>
</feature>
<feature type="helix" evidence="4">
    <location>
        <begin position="243"/>
        <end position="251"/>
    </location>
</feature>
<feature type="strand" evidence="4">
    <location>
        <begin position="254"/>
        <end position="261"/>
    </location>
</feature>
<feature type="helix" evidence="4">
    <location>
        <begin position="264"/>
        <end position="266"/>
    </location>
</feature>
<feature type="helix" evidence="4">
    <location>
        <begin position="279"/>
        <end position="282"/>
    </location>
</feature>
<feature type="strand" evidence="4">
    <location>
        <begin position="285"/>
        <end position="289"/>
    </location>
</feature>
<feature type="helix" evidence="4">
    <location>
        <begin position="298"/>
        <end position="316"/>
    </location>
</feature>
<feature type="strand" evidence="4">
    <location>
        <begin position="324"/>
        <end position="326"/>
    </location>
</feature>
<comment type="function">
    <text evidence="2">Catalyzes phosphite (phosphonate) oxidation.</text>
</comment>
<comment type="catalytic activity">
    <reaction evidence="2">
        <text>phosphonate + NAD(+) + H2O = phosphate + NADH + H(+)</text>
        <dbReference type="Rhea" id="RHEA:13173"/>
        <dbReference type="ChEBI" id="CHEBI:15377"/>
        <dbReference type="ChEBI" id="CHEBI:15378"/>
        <dbReference type="ChEBI" id="CHEBI:16215"/>
        <dbReference type="ChEBI" id="CHEBI:43474"/>
        <dbReference type="ChEBI" id="CHEBI:57540"/>
        <dbReference type="ChEBI" id="CHEBI:57945"/>
        <dbReference type="EC" id="1.20.1.1"/>
    </reaction>
</comment>
<comment type="activity regulation">
    <text evidence="2">Inhibited by NaCl, NADH and sulfite.</text>
</comment>
<comment type="biophysicochemical properties">
    <phDependence>
        <text>Optimum pH is 7.25-7.75.</text>
    </phDependence>
    <temperatureDependence>
        <text>Optimum temperature is 35 degrees Celsius.</text>
    </temperatureDependence>
</comment>
<comment type="subunit">
    <text evidence="2">Homodimer.</text>
</comment>
<comment type="induction">
    <text evidence="2">By phosphate starvation.</text>
</comment>
<comment type="mass spectrometry" mass="36413.0" error="18.0" method="MALDI" evidence="2"/>
<comment type="similarity">
    <text evidence="3">Belongs to the D-isomer specific 2-hydroxyacid dehydrogenase family.</text>
</comment>